<protein>
    <recommendedName>
        <fullName>Uncharacterized protein R156</fullName>
    </recommendedName>
</protein>
<keyword id="KW-1185">Reference proteome</keyword>
<accession>Q5UPM6</accession>
<sequence length="253" mass="29315">MTEIKETITITFCDCAENHVGMQQLGKLSKKGFSLDDLIKIKEWYSDRGLSTELFDLNWPLESLELEPDKKAYFLVIRKGTNLHTNSDELMNQLRNLEWDSKAFMYGRVVNKKARYNLCFGNINQKPNYQQIKGRVYKFTDIQLLDQAKNSLEEVTGINSLVAEGNYYYDVNKCGIGFHGDSERRIVIGIRLGSTLQLEYQWYQYSNPVGERMTIELNNGDIYFMSEKAVGTDWKKKNIPTLRHATGCDKFVK</sequence>
<feature type="chain" id="PRO_0000244776" description="Uncharacterized protein R156">
    <location>
        <begin position="1"/>
        <end position="253"/>
    </location>
</feature>
<gene>
    <name type="ordered locus">MIMI_R156</name>
</gene>
<name>YR156_MIMIV</name>
<dbReference type="EMBL" id="AY653733">
    <property type="protein sequence ID" value="AAV50431.1"/>
    <property type="molecule type" value="Genomic_DNA"/>
</dbReference>
<dbReference type="KEGG" id="vg:9924756"/>
<dbReference type="OrthoDB" id="13550at10239"/>
<dbReference type="Proteomes" id="UP000001134">
    <property type="component" value="Genome"/>
</dbReference>
<dbReference type="Gene3D" id="2.60.120.590">
    <property type="entry name" value="Alpha-ketoglutarate-dependent dioxygenase AlkB-like"/>
    <property type="match status" value="1"/>
</dbReference>
<dbReference type="InterPro" id="IPR037151">
    <property type="entry name" value="AlkB-like_sf"/>
</dbReference>
<dbReference type="SUPFAM" id="SSF51197">
    <property type="entry name" value="Clavaminate synthase-like"/>
    <property type="match status" value="1"/>
</dbReference>
<reference key="1">
    <citation type="journal article" date="2004" name="Science">
        <title>The 1.2-megabase genome sequence of Mimivirus.</title>
        <authorList>
            <person name="Raoult D."/>
            <person name="Audic S."/>
            <person name="Robert C."/>
            <person name="Abergel C."/>
            <person name="Renesto P."/>
            <person name="Ogata H."/>
            <person name="La Scola B."/>
            <person name="Susan M."/>
            <person name="Claverie J.-M."/>
        </authorList>
    </citation>
    <scope>NUCLEOTIDE SEQUENCE [LARGE SCALE GENOMIC DNA]</scope>
    <source>
        <strain>Rowbotham-Bradford</strain>
    </source>
</reference>
<proteinExistence type="predicted"/>
<organism>
    <name type="scientific">Acanthamoeba polyphaga mimivirus</name>
    <name type="common">APMV</name>
    <dbReference type="NCBI Taxonomy" id="212035"/>
    <lineage>
        <taxon>Viruses</taxon>
        <taxon>Varidnaviria</taxon>
        <taxon>Bamfordvirae</taxon>
        <taxon>Nucleocytoviricota</taxon>
        <taxon>Megaviricetes</taxon>
        <taxon>Imitervirales</taxon>
        <taxon>Mimiviridae</taxon>
        <taxon>Megamimivirinae</taxon>
        <taxon>Mimivirus</taxon>
        <taxon>Mimivirus bradfordmassiliense</taxon>
    </lineage>
</organism>
<organismHost>
    <name type="scientific">Acanthamoeba polyphaga</name>
    <name type="common">Amoeba</name>
    <dbReference type="NCBI Taxonomy" id="5757"/>
</organismHost>